<name>DUOX1_HUMAN</name>
<sequence length="1551" mass="177235">MGFCLALAWTLLVGAWTPLGAQNPISWEVQRFDGWYNNLMEHRWGSKGSRLQRLVPASYADGVYQPLGEPHLPNPRDLSNTISRGPAGLASLRNRTVLGVFFGYHVLSDLVSVETPGCPAEFLNIRIPPGDPMFDPDQRGDVVLPFQRSRWDPETGRSPSNPRDPANQVTGWLDGSAIYGSSHSWSDALRSFSRGQLASGPDPAFPRDSQNPLLMWAAPDPATGQNGPRGLYAFGAERGNREPFLQALGLLWFRYHNLWAQRLARQHPDWEDEELFQHARKRVIATYQNIAVYEWLPSFLQKTLPEYTGYRPFLDPSISSEFVAASEQFLSTMVPPGVYMRNASCHFQGVINRNSSVSRALRVCNSYWSREHPSLQSAEDVDALLLGMASQIAEREDHVLVEDVRDFWPGPLKFSRTDHLASCLQRGRDLGLPSYTKARAALGLSPITRWQDINPALSRSNDTVLEATAALYNQDLSWLELLPGGLLESHRDPGPLFSTIVLEQFVRLRDGDRYWFENTRNGLFSKKEIEEIRNTTLQDVLVAVINIDPSALQPNVFVWHKGDPCPQPRQLSTEGLPACAPSVVRDYFEGSGFGFGVTIGTLCCFPLVSLLSAWIVARLRMRNFKRLQGQDRQSIVSEKLVGGMEALEWQGHKEPCRPVLVYLQPGQIRVVDGRLTVLRTIQLQPPQKVNFVLSSNRGRRTLLLKIPKEYDLVLLFNLEEERQALVENLRGALKESGLSIQEWELREQELMRAAVTREQRRHLLETFFRHLFSQVLDINQADAGTLPLDSSQKVREALTCELSRAEFAESLGLKPQDMFVESMFSLADKDGNGYLSFREFLDILVVFMKGSPEEKSRLMFRMYDFDGNGLISKDEFIRMLRSFIEISNNCLSKAQLAEVVESMFRESGFQDKEELTWEDFHFMLRDHNSELRFTQLCVKGVEVPEVIKDLCRRASYISQDMICPSPRVSARCSRSDIETELTPQRLQCPMDTDPPQEIRRRFGKKVTSFQPLLFTEAHREKFQRSCLHQTVQQFKRFIENYRRHIGCVAVFYAIAGGLFLERAYYYAFAAHHTGITDTTRVGIILSRGTAASISFMFSYILLTMCRNLITFLRETFLNRYVPFDAAVDFHRLIASTAIVLTVLHSVGHVVNVYLFSISPLSVLSCLFPGLFHDDGSELPQKYYWWFFQTVPGLTGVVLLLILAIMYVFASHHFRRRSFRGFWLTHHLYILLYVLLIIHGSFALIQLPRFHIFFLVPAIIYGGDKLVSLSRKKVEISVVKAELLPSGVTHLRFQRPQGFEYKSGQWVRIACLALGTTEYHPFTLTSAPHEDTLSLHIRAAGPWTTRLREIYSAPTGDRCARYPKLYLDGPFGEGHQEWHKFEVSVLVGGGIGVTPFASILKDLVFKSSVSCQVFCKKIYFIWVTRTQRQFEWLADIIREVEENDHQDLVSVHIYITQLAEKFDLRTTMLYICERHFQKVLNRSLFTGLRSITHFGRPPFEPFFNSLQEVHPQVRKIGVFSCGPPGMTKNVEKACQLINRQDRTHFSHHYENF</sequence>
<dbReference type="EC" id="1.11.1.-"/>
<dbReference type="EC" id="1.6.3.1"/>
<dbReference type="EMBL" id="AF230495">
    <property type="protein sequence ID" value="AAF73921.1"/>
    <property type="molecule type" value="mRNA"/>
</dbReference>
<dbReference type="EMBL" id="AF213465">
    <property type="protein sequence ID" value="AAF71295.1"/>
    <property type="molecule type" value="mRNA"/>
</dbReference>
<dbReference type="EMBL" id="AK128591">
    <property type="status" value="NOT_ANNOTATED_CDS"/>
    <property type="molecule type" value="mRNA"/>
</dbReference>
<dbReference type="EMBL" id="AK172859">
    <property type="protein sequence ID" value="BAD18816.1"/>
    <property type="status" value="ALT_INIT"/>
    <property type="molecule type" value="mRNA"/>
</dbReference>
<dbReference type="EMBL" id="AC051619">
    <property type="status" value="NOT_ANNOTATED_CDS"/>
    <property type="molecule type" value="Genomic_DNA"/>
</dbReference>
<dbReference type="EMBL" id="BC114628">
    <property type="protein sequence ID" value="AAI14629.1"/>
    <property type="molecule type" value="mRNA"/>
</dbReference>
<dbReference type="CCDS" id="CCDS32221.1">
    <molecule id="Q9NRD9-1"/>
</dbReference>
<dbReference type="RefSeq" id="NP_059130.2">
    <molecule id="Q9NRD9-1"/>
    <property type="nucleotide sequence ID" value="NM_017434.4"/>
</dbReference>
<dbReference type="RefSeq" id="NP_787954.1">
    <molecule id="Q9NRD9-1"/>
    <property type="nucleotide sequence ID" value="NM_175940.3"/>
</dbReference>
<dbReference type="RefSeq" id="XP_011519984.1">
    <molecule id="Q9NRD9-2"/>
    <property type="nucleotide sequence ID" value="XM_011521682.2"/>
</dbReference>
<dbReference type="RefSeq" id="XP_047288646.1">
    <molecule id="Q9NRD9-1"/>
    <property type="nucleotide sequence ID" value="XM_047432690.1"/>
</dbReference>
<dbReference type="RefSeq" id="XP_047288647.1">
    <molecule id="Q9NRD9-1"/>
    <property type="nucleotide sequence ID" value="XM_047432691.1"/>
</dbReference>
<dbReference type="RefSeq" id="XP_047288648.1">
    <molecule id="Q9NRD9-1"/>
    <property type="nucleotide sequence ID" value="XM_047432692.1"/>
</dbReference>
<dbReference type="RefSeq" id="XP_047288649.1">
    <molecule id="Q9NRD9-1"/>
    <property type="nucleotide sequence ID" value="XM_047432693.1"/>
</dbReference>
<dbReference type="PDB" id="7D3E">
    <property type="method" value="EM"/>
    <property type="resolution" value="2.80 A"/>
    <property type="chains" value="A/C=1-1551"/>
</dbReference>
<dbReference type="PDB" id="7D3F">
    <property type="method" value="EM"/>
    <property type="resolution" value="2.30 A"/>
    <property type="chains" value="A/C=1-1551"/>
</dbReference>
<dbReference type="PDBsum" id="7D3E"/>
<dbReference type="PDBsum" id="7D3F"/>
<dbReference type="EMDB" id="EMD-30555"/>
<dbReference type="EMDB" id="EMD-30556"/>
<dbReference type="SMR" id="Q9NRD9"/>
<dbReference type="BioGRID" id="119815">
    <property type="interactions" value="12"/>
</dbReference>
<dbReference type="ComplexPortal" id="CPX-8183">
    <property type="entry name" value="DUOX1-DUOXA1 dual oxidase complex"/>
</dbReference>
<dbReference type="CORUM" id="Q9NRD9"/>
<dbReference type="FunCoup" id="Q9NRD9">
    <property type="interactions" value="10"/>
</dbReference>
<dbReference type="IntAct" id="Q9NRD9">
    <property type="interactions" value="9"/>
</dbReference>
<dbReference type="STRING" id="9606.ENSP00000317997"/>
<dbReference type="BindingDB" id="Q9NRD9"/>
<dbReference type="ChEMBL" id="CHEMBL5465362"/>
<dbReference type="PeroxiBase" id="3339">
    <property type="entry name" value="HsDuOx01"/>
</dbReference>
<dbReference type="TCDB" id="5.B.1.1.6">
    <property type="family name" value="the phagocyte (gp91(phox)) nadph oxidase family"/>
</dbReference>
<dbReference type="GlyCosmos" id="Q9NRD9">
    <property type="glycosylation" value="5 sites, No reported glycans"/>
</dbReference>
<dbReference type="GlyGen" id="Q9NRD9">
    <property type="glycosylation" value="6 sites, 1 O-linked glycan (1 site)"/>
</dbReference>
<dbReference type="iPTMnet" id="Q9NRD9"/>
<dbReference type="PhosphoSitePlus" id="Q9NRD9"/>
<dbReference type="BioMuta" id="DUOX1"/>
<dbReference type="DMDM" id="74719102"/>
<dbReference type="jPOST" id="Q9NRD9"/>
<dbReference type="MassIVE" id="Q9NRD9"/>
<dbReference type="PaxDb" id="9606-ENSP00000317997"/>
<dbReference type="PeptideAtlas" id="Q9NRD9"/>
<dbReference type="ProteomicsDB" id="82341">
    <molecule id="Q9NRD9-1"/>
</dbReference>
<dbReference type="ProteomicsDB" id="82342">
    <molecule id="Q9NRD9-2"/>
</dbReference>
<dbReference type="Antibodypedia" id="11716">
    <property type="antibodies" value="121 antibodies from 27 providers"/>
</dbReference>
<dbReference type="DNASU" id="53905"/>
<dbReference type="Ensembl" id="ENST00000321429.8">
    <molecule id="Q9NRD9-1"/>
    <property type="protein sequence ID" value="ENSP00000317997.4"/>
    <property type="gene ID" value="ENSG00000137857.18"/>
</dbReference>
<dbReference type="Ensembl" id="ENST00000389037.7">
    <molecule id="Q9NRD9-1"/>
    <property type="protein sequence ID" value="ENSP00000373689.3"/>
    <property type="gene ID" value="ENSG00000137857.18"/>
</dbReference>
<dbReference type="Ensembl" id="ENST00000561166.1">
    <molecule id="Q9NRD9-2"/>
    <property type="protein sequence ID" value="ENSP00000454065.1"/>
    <property type="gene ID" value="ENSG00000137857.18"/>
</dbReference>
<dbReference type="GeneID" id="53905"/>
<dbReference type="KEGG" id="hsa:53905"/>
<dbReference type="MANE-Select" id="ENST00000389037.7">
    <property type="protein sequence ID" value="ENSP00000373689.3"/>
    <property type="RefSeq nucleotide sequence ID" value="NM_175940.3"/>
    <property type="RefSeq protein sequence ID" value="NP_787954.1"/>
</dbReference>
<dbReference type="UCSC" id="uc001zus.3">
    <molecule id="Q9NRD9-1"/>
    <property type="organism name" value="human"/>
</dbReference>
<dbReference type="AGR" id="HGNC:3062"/>
<dbReference type="CTD" id="53905"/>
<dbReference type="DisGeNET" id="53905"/>
<dbReference type="GeneCards" id="DUOX1"/>
<dbReference type="HGNC" id="HGNC:3062">
    <property type="gene designation" value="DUOX1"/>
</dbReference>
<dbReference type="HPA" id="ENSG00000137857">
    <property type="expression patterns" value="Tissue enhanced (esophagus, skin)"/>
</dbReference>
<dbReference type="MalaCards" id="DUOX1"/>
<dbReference type="MIM" id="606758">
    <property type="type" value="gene"/>
</dbReference>
<dbReference type="neXtProt" id="NX_Q9NRD9"/>
<dbReference type="OpenTargets" id="ENSG00000137857"/>
<dbReference type="PharmGKB" id="PA27516"/>
<dbReference type="VEuPathDB" id="HostDB:ENSG00000137857"/>
<dbReference type="eggNOG" id="KOG0039">
    <property type="taxonomic scope" value="Eukaryota"/>
</dbReference>
<dbReference type="GeneTree" id="ENSGT00940000161792"/>
<dbReference type="HOGENOM" id="CLU_004482_1_0_1"/>
<dbReference type="InParanoid" id="Q9NRD9"/>
<dbReference type="OMA" id="VIAFHIR"/>
<dbReference type="OrthoDB" id="6019201at2759"/>
<dbReference type="PAN-GO" id="Q9NRD9">
    <property type="GO annotations" value="5 GO annotations based on evolutionary models"/>
</dbReference>
<dbReference type="PhylomeDB" id="Q9NRD9"/>
<dbReference type="TreeFam" id="TF105424"/>
<dbReference type="BRENDA" id="1.6.3.1">
    <property type="organism ID" value="2681"/>
</dbReference>
<dbReference type="PathwayCommons" id="Q9NRD9"/>
<dbReference type="Reactome" id="R-HSA-209968">
    <property type="pathway name" value="Thyroxine biosynthesis"/>
</dbReference>
<dbReference type="SABIO-RK" id="Q9NRD9"/>
<dbReference type="SignaLink" id="Q9NRD9"/>
<dbReference type="SIGNOR" id="Q9NRD9"/>
<dbReference type="UniPathway" id="UPA00194"/>
<dbReference type="BioGRID-ORCS" id="53905">
    <property type="hits" value="10 hits in 1143 CRISPR screens"/>
</dbReference>
<dbReference type="ChiTaRS" id="DUOX1">
    <property type="organism name" value="human"/>
</dbReference>
<dbReference type="GeneWiki" id="Dual_oxidase_1"/>
<dbReference type="GenomeRNAi" id="53905"/>
<dbReference type="Pharos" id="Q9NRD9">
    <property type="development level" value="Tbio"/>
</dbReference>
<dbReference type="PRO" id="PR:Q9NRD9"/>
<dbReference type="Proteomes" id="UP000005640">
    <property type="component" value="Chromosome 15"/>
</dbReference>
<dbReference type="RNAct" id="Q9NRD9">
    <property type="molecule type" value="protein"/>
</dbReference>
<dbReference type="Bgee" id="ENSG00000137857">
    <property type="expression patterns" value="Expressed in tongue squamous epithelium and 138 other cell types or tissues"/>
</dbReference>
<dbReference type="ExpressionAtlas" id="Q9NRD9">
    <property type="expression patterns" value="baseline and differential"/>
</dbReference>
<dbReference type="GO" id="GO:0016324">
    <property type="term" value="C:apical plasma membrane"/>
    <property type="evidence" value="ECO:0000303"/>
    <property type="project" value="UniProtKB"/>
</dbReference>
<dbReference type="GO" id="GO:0031252">
    <property type="term" value="C:cell leading edge"/>
    <property type="evidence" value="ECO:0000316"/>
    <property type="project" value="UniProtKB"/>
</dbReference>
<dbReference type="GO" id="GO:0009986">
    <property type="term" value="C:cell surface"/>
    <property type="evidence" value="ECO:0000316"/>
    <property type="project" value="UniProtKB"/>
</dbReference>
<dbReference type="GO" id="GO:0005783">
    <property type="term" value="C:endoplasmic reticulum"/>
    <property type="evidence" value="ECO:0000314"/>
    <property type="project" value="UniProtKB"/>
</dbReference>
<dbReference type="GO" id="GO:0043020">
    <property type="term" value="C:NADPH oxidase complex"/>
    <property type="evidence" value="ECO:0000318"/>
    <property type="project" value="GO_Central"/>
</dbReference>
<dbReference type="GO" id="GO:0005886">
    <property type="term" value="C:plasma membrane"/>
    <property type="evidence" value="ECO:0000314"/>
    <property type="project" value="UniProtKB"/>
</dbReference>
<dbReference type="GO" id="GO:0005509">
    <property type="term" value="F:calcium ion binding"/>
    <property type="evidence" value="ECO:0007669"/>
    <property type="project" value="InterPro"/>
</dbReference>
<dbReference type="GO" id="GO:0020037">
    <property type="term" value="F:heme binding"/>
    <property type="evidence" value="ECO:0007669"/>
    <property type="project" value="InterPro"/>
</dbReference>
<dbReference type="GO" id="GO:0016174">
    <property type="term" value="F:NAD(P)H oxidase H2O2-forming activity"/>
    <property type="evidence" value="ECO:0000304"/>
    <property type="project" value="Reactome"/>
</dbReference>
<dbReference type="GO" id="GO:0106293">
    <property type="term" value="F:NADH oxidase H202-forming activity"/>
    <property type="evidence" value="ECO:0007669"/>
    <property type="project" value="RHEA"/>
</dbReference>
<dbReference type="GO" id="GO:0050661">
    <property type="term" value="F:NADP binding"/>
    <property type="evidence" value="ECO:0000303"/>
    <property type="project" value="UniProtKB"/>
</dbReference>
<dbReference type="GO" id="GO:0106294">
    <property type="term" value="F:NADPH oxidase H202-forming activity"/>
    <property type="evidence" value="ECO:0007669"/>
    <property type="project" value="RHEA"/>
</dbReference>
<dbReference type="GO" id="GO:0004601">
    <property type="term" value="F:peroxidase activity"/>
    <property type="evidence" value="ECO:0007669"/>
    <property type="project" value="UniProtKB-KW"/>
</dbReference>
<dbReference type="GO" id="GO:0016175">
    <property type="term" value="F:superoxide-generating NAD(P)H oxidase activity"/>
    <property type="evidence" value="ECO:0000318"/>
    <property type="project" value="GO_Central"/>
</dbReference>
<dbReference type="GO" id="GO:0042335">
    <property type="term" value="P:cuticle development"/>
    <property type="evidence" value="ECO:0000315"/>
    <property type="project" value="UniProtKB"/>
</dbReference>
<dbReference type="GO" id="GO:0019221">
    <property type="term" value="P:cytokine-mediated signaling pathway"/>
    <property type="evidence" value="ECO:0000314"/>
    <property type="project" value="UniProtKB"/>
</dbReference>
<dbReference type="GO" id="GO:0006952">
    <property type="term" value="P:defense response"/>
    <property type="evidence" value="ECO:0000318"/>
    <property type="project" value="GO_Central"/>
</dbReference>
<dbReference type="GO" id="GO:0042446">
    <property type="term" value="P:hormone biosynthetic process"/>
    <property type="evidence" value="ECO:0007669"/>
    <property type="project" value="UniProtKB-KW"/>
</dbReference>
<dbReference type="GO" id="GO:0050665">
    <property type="term" value="P:hydrogen peroxide biosynthetic process"/>
    <property type="evidence" value="ECO:0000316"/>
    <property type="project" value="UniProtKB"/>
</dbReference>
<dbReference type="GO" id="GO:0042744">
    <property type="term" value="P:hydrogen peroxide catabolic process"/>
    <property type="evidence" value="ECO:0007669"/>
    <property type="project" value="UniProtKB-KW"/>
</dbReference>
<dbReference type="GO" id="GO:2000147">
    <property type="term" value="P:positive regulation of cell motility"/>
    <property type="evidence" value="ECO:0000316"/>
    <property type="project" value="UniProtKB"/>
</dbReference>
<dbReference type="GO" id="GO:0090303">
    <property type="term" value="P:positive regulation of wound healing"/>
    <property type="evidence" value="ECO:0000316"/>
    <property type="project" value="UniProtKB"/>
</dbReference>
<dbReference type="GO" id="GO:0051591">
    <property type="term" value="P:response to cAMP"/>
    <property type="evidence" value="ECO:0000314"/>
    <property type="project" value="UniProtKB"/>
</dbReference>
<dbReference type="GO" id="GO:0006979">
    <property type="term" value="P:response to oxidative stress"/>
    <property type="evidence" value="ECO:0007669"/>
    <property type="project" value="InterPro"/>
</dbReference>
<dbReference type="GO" id="GO:0042554">
    <property type="term" value="P:superoxide anion generation"/>
    <property type="evidence" value="ECO:0000318"/>
    <property type="project" value="GO_Central"/>
</dbReference>
<dbReference type="GO" id="GO:0006590">
    <property type="term" value="P:thyroid hormone generation"/>
    <property type="evidence" value="ECO:0000304"/>
    <property type="project" value="Reactome"/>
</dbReference>
<dbReference type="CDD" id="cd09820">
    <property type="entry name" value="dual_peroxidase_like"/>
    <property type="match status" value="1"/>
</dbReference>
<dbReference type="CDD" id="cd00051">
    <property type="entry name" value="EFh"/>
    <property type="match status" value="2"/>
</dbReference>
<dbReference type="CDD" id="cd06186">
    <property type="entry name" value="NOX_Duox_like_FAD_NADP"/>
    <property type="match status" value="1"/>
</dbReference>
<dbReference type="FunFam" id="2.40.30.10:FF:000043">
    <property type="entry name" value="dual oxidase 1"/>
    <property type="match status" value="1"/>
</dbReference>
<dbReference type="FunFam" id="1.10.640.10:FF:000004">
    <property type="entry name" value="Dual oxidase 2"/>
    <property type="match status" value="1"/>
</dbReference>
<dbReference type="FunFam" id="3.40.50.80:FF:000006">
    <property type="entry name" value="Dual oxidase 2"/>
    <property type="match status" value="1"/>
</dbReference>
<dbReference type="FunFam" id="1.10.238.10:FF:000095">
    <property type="entry name" value="dual oxidase 2"/>
    <property type="match status" value="1"/>
</dbReference>
<dbReference type="Gene3D" id="1.10.238.10">
    <property type="entry name" value="EF-hand"/>
    <property type="match status" value="1"/>
</dbReference>
<dbReference type="Gene3D" id="1.10.640.10">
    <property type="entry name" value="Haem peroxidase domain superfamily, animal type"/>
    <property type="match status" value="1"/>
</dbReference>
<dbReference type="Gene3D" id="3.40.50.80">
    <property type="entry name" value="Nucleotide-binding domain of ferredoxin-NADP reductase (FNR) module"/>
    <property type="match status" value="1"/>
</dbReference>
<dbReference type="Gene3D" id="2.40.30.10">
    <property type="entry name" value="Translation factors"/>
    <property type="match status" value="1"/>
</dbReference>
<dbReference type="InterPro" id="IPR034821">
    <property type="entry name" value="DUOX_peroxidase"/>
</dbReference>
<dbReference type="InterPro" id="IPR011992">
    <property type="entry name" value="EF-hand-dom_pair"/>
</dbReference>
<dbReference type="InterPro" id="IPR018247">
    <property type="entry name" value="EF_Hand_1_Ca_BS"/>
</dbReference>
<dbReference type="InterPro" id="IPR002048">
    <property type="entry name" value="EF_hand_dom"/>
</dbReference>
<dbReference type="InterPro" id="IPR013112">
    <property type="entry name" value="FAD-bd_8"/>
</dbReference>
<dbReference type="InterPro" id="IPR017927">
    <property type="entry name" value="FAD-bd_FR_type"/>
</dbReference>
<dbReference type="InterPro" id="IPR013130">
    <property type="entry name" value="Fe3_Rdtase_TM_dom"/>
</dbReference>
<dbReference type="InterPro" id="IPR013121">
    <property type="entry name" value="Fe_red_NAD-bd_6"/>
</dbReference>
<dbReference type="InterPro" id="IPR039261">
    <property type="entry name" value="FNR_nucleotide-bd"/>
</dbReference>
<dbReference type="InterPro" id="IPR019791">
    <property type="entry name" value="Haem_peroxidase_animal"/>
</dbReference>
<dbReference type="InterPro" id="IPR010255">
    <property type="entry name" value="Haem_peroxidase_sf"/>
</dbReference>
<dbReference type="InterPro" id="IPR037120">
    <property type="entry name" value="Haem_peroxidase_sf_animal"/>
</dbReference>
<dbReference type="InterPro" id="IPR050369">
    <property type="entry name" value="RBOH/FRE"/>
</dbReference>
<dbReference type="InterPro" id="IPR017938">
    <property type="entry name" value="Riboflavin_synthase-like_b-brl"/>
</dbReference>
<dbReference type="PANTHER" id="PTHR11972:SF75">
    <property type="entry name" value="DUAL OXIDASE 1"/>
    <property type="match status" value="1"/>
</dbReference>
<dbReference type="PANTHER" id="PTHR11972">
    <property type="entry name" value="NADPH OXIDASE"/>
    <property type="match status" value="1"/>
</dbReference>
<dbReference type="Pfam" id="PF03098">
    <property type="entry name" value="An_peroxidase"/>
    <property type="match status" value="1"/>
</dbReference>
<dbReference type="Pfam" id="PF00036">
    <property type="entry name" value="EF-hand_1"/>
    <property type="match status" value="1"/>
</dbReference>
<dbReference type="Pfam" id="PF13499">
    <property type="entry name" value="EF-hand_7"/>
    <property type="match status" value="1"/>
</dbReference>
<dbReference type="Pfam" id="PF08022">
    <property type="entry name" value="FAD_binding_8"/>
    <property type="match status" value="1"/>
</dbReference>
<dbReference type="Pfam" id="PF01794">
    <property type="entry name" value="Ferric_reduct"/>
    <property type="match status" value="1"/>
</dbReference>
<dbReference type="Pfam" id="PF08030">
    <property type="entry name" value="NAD_binding_6"/>
    <property type="match status" value="1"/>
</dbReference>
<dbReference type="PRINTS" id="PR00457">
    <property type="entry name" value="ANPEROXIDASE"/>
</dbReference>
<dbReference type="SFLD" id="SFLDS00052">
    <property type="entry name" value="Ferric_Reductase_Domain"/>
    <property type="match status" value="1"/>
</dbReference>
<dbReference type="SFLD" id="SFLDG01168">
    <property type="entry name" value="Ferric_reductase_subgroup_(FRE"/>
    <property type="match status" value="1"/>
</dbReference>
<dbReference type="SFLD" id="SFLDG01169">
    <property type="entry name" value="NADPH_oxidase_subgroup_(NOX)"/>
    <property type="match status" value="1"/>
</dbReference>
<dbReference type="SMART" id="SM00054">
    <property type="entry name" value="EFh"/>
    <property type="match status" value="2"/>
</dbReference>
<dbReference type="SUPFAM" id="SSF47473">
    <property type="entry name" value="EF-hand"/>
    <property type="match status" value="1"/>
</dbReference>
<dbReference type="SUPFAM" id="SSF52343">
    <property type="entry name" value="Ferredoxin reductase-like, C-terminal NADP-linked domain"/>
    <property type="match status" value="1"/>
</dbReference>
<dbReference type="SUPFAM" id="SSF48113">
    <property type="entry name" value="Heme-dependent peroxidases"/>
    <property type="match status" value="1"/>
</dbReference>
<dbReference type="SUPFAM" id="SSF63380">
    <property type="entry name" value="Riboflavin synthase domain-like"/>
    <property type="match status" value="1"/>
</dbReference>
<dbReference type="PROSITE" id="PS00018">
    <property type="entry name" value="EF_HAND_1"/>
    <property type="match status" value="2"/>
</dbReference>
<dbReference type="PROSITE" id="PS50222">
    <property type="entry name" value="EF_HAND_2"/>
    <property type="match status" value="3"/>
</dbReference>
<dbReference type="PROSITE" id="PS51384">
    <property type="entry name" value="FAD_FR"/>
    <property type="match status" value="1"/>
</dbReference>
<dbReference type="PROSITE" id="PS50292">
    <property type="entry name" value="PEROXIDASE_3"/>
    <property type="match status" value="1"/>
</dbReference>
<reference key="1">
    <citation type="journal article" date="2000" name="J. Biol. Chem.">
        <title>Cloning of two human thyroid cDNAs encoding new members of the NADPH oxidase family.</title>
        <authorList>
            <person name="De Deken X."/>
            <person name="Wang D."/>
            <person name="Many M.-C."/>
            <person name="Costagliola S."/>
            <person name="Libert F."/>
            <person name="Vassart G."/>
            <person name="Dumont J.E."/>
            <person name="Miot F."/>
        </authorList>
    </citation>
    <scope>NUCLEOTIDE SEQUENCE [MRNA] (ISOFORM 1)</scope>
    <scope>SUBCELLULAR LOCATION</scope>
    <scope>TISSUE SPECIFICITY</scope>
    <scope>INDUCTION</scope>
    <source>
        <tissue>Thyroid</tissue>
    </source>
</reference>
<reference key="2">
    <citation type="journal article" date="2001" name="J. Cell Biol.">
        <title>Tyrosine cross-linking of extracellular matrix is catalyzed by Duox, a multidomain oxidase/peroxidase with homology to the phagocyte oxidase subunit gp91phox.</title>
        <authorList>
            <person name="Edens W.A."/>
            <person name="Sharling L."/>
            <person name="Cheng G."/>
            <person name="Shapira R."/>
            <person name="Kinkade J.M."/>
            <person name="Lee T."/>
            <person name="Edens H.A."/>
            <person name="Tang X."/>
            <person name="Sullards C."/>
            <person name="Flaherty D.B."/>
            <person name="Benian G.M."/>
            <person name="Lambeth J.D."/>
        </authorList>
    </citation>
    <scope>NUCLEOTIDE SEQUENCE [MRNA] (ISOFORM 1)</scope>
    <scope>VARIANT PHE-1178</scope>
    <scope>FUNCTION</scope>
    <scope>CATALYTIC ACTIVITY</scope>
    <scope>ACTIVITY REGULATION</scope>
    <scope>DEVELOPMENTAL STAGE</scope>
    <scope>TISSUE SPECIFICITY</scope>
    <source>
        <tissue>Lung</tissue>
    </source>
</reference>
<reference key="3">
    <citation type="journal article" date="2004" name="Nat. Genet.">
        <title>Complete sequencing and characterization of 21,243 full-length human cDNAs.</title>
        <authorList>
            <person name="Ota T."/>
            <person name="Suzuki Y."/>
            <person name="Nishikawa T."/>
            <person name="Otsuki T."/>
            <person name="Sugiyama T."/>
            <person name="Irie R."/>
            <person name="Wakamatsu A."/>
            <person name="Hayashi K."/>
            <person name="Sato H."/>
            <person name="Nagai K."/>
            <person name="Kimura K."/>
            <person name="Makita H."/>
            <person name="Sekine M."/>
            <person name="Obayashi M."/>
            <person name="Nishi T."/>
            <person name="Shibahara T."/>
            <person name="Tanaka T."/>
            <person name="Ishii S."/>
            <person name="Yamamoto J."/>
            <person name="Saito K."/>
            <person name="Kawai Y."/>
            <person name="Isono Y."/>
            <person name="Nakamura Y."/>
            <person name="Nagahari K."/>
            <person name="Murakami K."/>
            <person name="Yasuda T."/>
            <person name="Iwayanagi T."/>
            <person name="Wagatsuma M."/>
            <person name="Shiratori A."/>
            <person name="Sudo H."/>
            <person name="Hosoiri T."/>
            <person name="Kaku Y."/>
            <person name="Kodaira H."/>
            <person name="Kondo H."/>
            <person name="Sugawara M."/>
            <person name="Takahashi M."/>
            <person name="Kanda K."/>
            <person name="Yokoi T."/>
            <person name="Furuya T."/>
            <person name="Kikkawa E."/>
            <person name="Omura Y."/>
            <person name="Abe K."/>
            <person name="Kamihara K."/>
            <person name="Katsuta N."/>
            <person name="Sato K."/>
            <person name="Tanikawa M."/>
            <person name="Yamazaki M."/>
            <person name="Ninomiya K."/>
            <person name="Ishibashi T."/>
            <person name="Yamashita H."/>
            <person name="Murakawa K."/>
            <person name="Fujimori K."/>
            <person name="Tanai H."/>
            <person name="Kimata M."/>
            <person name="Watanabe M."/>
            <person name="Hiraoka S."/>
            <person name="Chiba Y."/>
            <person name="Ishida S."/>
            <person name="Ono Y."/>
            <person name="Takiguchi S."/>
            <person name="Watanabe S."/>
            <person name="Yosida M."/>
            <person name="Hotuta T."/>
            <person name="Kusano J."/>
            <person name="Kanehori K."/>
            <person name="Takahashi-Fujii A."/>
            <person name="Hara H."/>
            <person name="Tanase T.-O."/>
            <person name="Nomura Y."/>
            <person name="Togiya S."/>
            <person name="Komai F."/>
            <person name="Hara R."/>
            <person name="Takeuchi K."/>
            <person name="Arita M."/>
            <person name="Imose N."/>
            <person name="Musashino K."/>
            <person name="Yuuki H."/>
            <person name="Oshima A."/>
            <person name="Sasaki N."/>
            <person name="Aotsuka S."/>
            <person name="Yoshikawa Y."/>
            <person name="Matsunawa H."/>
            <person name="Ichihara T."/>
            <person name="Shiohata N."/>
            <person name="Sano S."/>
            <person name="Moriya S."/>
            <person name="Momiyama H."/>
            <person name="Satoh N."/>
            <person name="Takami S."/>
            <person name="Terashima Y."/>
            <person name="Suzuki O."/>
            <person name="Nakagawa S."/>
            <person name="Senoh A."/>
            <person name="Mizoguchi H."/>
            <person name="Goto Y."/>
            <person name="Shimizu F."/>
            <person name="Wakebe H."/>
            <person name="Hishigaki H."/>
            <person name="Watanabe T."/>
            <person name="Sugiyama A."/>
            <person name="Takemoto M."/>
            <person name="Kawakami B."/>
            <person name="Yamazaki M."/>
            <person name="Watanabe K."/>
            <person name="Kumagai A."/>
            <person name="Itakura S."/>
            <person name="Fukuzumi Y."/>
            <person name="Fujimori Y."/>
            <person name="Komiyama M."/>
            <person name="Tashiro H."/>
            <person name="Tanigami A."/>
            <person name="Fujiwara T."/>
            <person name="Ono T."/>
            <person name="Yamada K."/>
            <person name="Fujii Y."/>
            <person name="Ozaki K."/>
            <person name="Hirao M."/>
            <person name="Ohmori Y."/>
            <person name="Kawabata A."/>
            <person name="Hikiji T."/>
            <person name="Kobatake N."/>
            <person name="Inagaki H."/>
            <person name="Ikema Y."/>
            <person name="Okamoto S."/>
            <person name="Okitani R."/>
            <person name="Kawakami T."/>
            <person name="Noguchi S."/>
            <person name="Itoh T."/>
            <person name="Shigeta K."/>
            <person name="Senba T."/>
            <person name="Matsumura K."/>
            <person name="Nakajima Y."/>
            <person name="Mizuno T."/>
            <person name="Morinaga M."/>
            <person name="Sasaki M."/>
            <person name="Togashi T."/>
            <person name="Oyama M."/>
            <person name="Hata H."/>
            <person name="Watanabe M."/>
            <person name="Komatsu T."/>
            <person name="Mizushima-Sugano J."/>
            <person name="Satoh T."/>
            <person name="Shirai Y."/>
            <person name="Takahashi Y."/>
            <person name="Nakagawa K."/>
            <person name="Okumura K."/>
            <person name="Nagase T."/>
            <person name="Nomura N."/>
            <person name="Kikuchi H."/>
            <person name="Masuho Y."/>
            <person name="Yamashita R."/>
            <person name="Nakai K."/>
            <person name="Yada T."/>
            <person name="Nakamura Y."/>
            <person name="Ohara O."/>
            <person name="Isogai T."/>
            <person name="Sugano S."/>
        </authorList>
    </citation>
    <scope>NUCLEOTIDE SEQUENCE [LARGE SCALE MRNA] (ISOFORM 2)</scope>
    <scope>NUCLEOTIDE SEQUENCE [LARGE SCALE MRNA] OF 1030-1551 (ISOFORMS 1/2)</scope>
    <scope>VARIANT ARG-1026</scope>
    <source>
        <tissue>Lung</tissue>
        <tissue>Trachea</tissue>
    </source>
</reference>
<reference key="4">
    <citation type="journal article" date="2006" name="Nature">
        <title>Analysis of the DNA sequence and duplication history of human chromosome 15.</title>
        <authorList>
            <person name="Zody M.C."/>
            <person name="Garber M."/>
            <person name="Sharpe T."/>
            <person name="Young S.K."/>
            <person name="Rowen L."/>
            <person name="O'Neill K."/>
            <person name="Whittaker C.A."/>
            <person name="Kamal M."/>
            <person name="Chang J.L."/>
            <person name="Cuomo C.A."/>
            <person name="Dewar K."/>
            <person name="FitzGerald M.G."/>
            <person name="Kodira C.D."/>
            <person name="Madan A."/>
            <person name="Qin S."/>
            <person name="Yang X."/>
            <person name="Abbasi N."/>
            <person name="Abouelleil A."/>
            <person name="Arachchi H.M."/>
            <person name="Baradarani L."/>
            <person name="Birditt B."/>
            <person name="Bloom S."/>
            <person name="Bloom T."/>
            <person name="Borowsky M.L."/>
            <person name="Burke J."/>
            <person name="Butler J."/>
            <person name="Cook A."/>
            <person name="DeArellano K."/>
            <person name="DeCaprio D."/>
            <person name="Dorris L. III"/>
            <person name="Dors M."/>
            <person name="Eichler E.E."/>
            <person name="Engels R."/>
            <person name="Fahey J."/>
            <person name="Fleetwood P."/>
            <person name="Friedman C."/>
            <person name="Gearin G."/>
            <person name="Hall J.L."/>
            <person name="Hensley G."/>
            <person name="Johnson E."/>
            <person name="Jones C."/>
            <person name="Kamat A."/>
            <person name="Kaur A."/>
            <person name="Locke D.P."/>
            <person name="Madan A."/>
            <person name="Munson G."/>
            <person name="Jaffe D.B."/>
            <person name="Lui A."/>
            <person name="Macdonald P."/>
            <person name="Mauceli E."/>
            <person name="Naylor J.W."/>
            <person name="Nesbitt R."/>
            <person name="Nicol R."/>
            <person name="O'Leary S.B."/>
            <person name="Ratcliffe A."/>
            <person name="Rounsley S."/>
            <person name="She X."/>
            <person name="Sneddon K.M.B."/>
            <person name="Stewart S."/>
            <person name="Sougnez C."/>
            <person name="Stone S.M."/>
            <person name="Topham K."/>
            <person name="Vincent D."/>
            <person name="Wang S."/>
            <person name="Zimmer A.R."/>
            <person name="Birren B.W."/>
            <person name="Hood L."/>
            <person name="Lander E.S."/>
            <person name="Nusbaum C."/>
        </authorList>
    </citation>
    <scope>NUCLEOTIDE SEQUENCE [LARGE SCALE GENOMIC DNA]</scope>
</reference>
<reference key="5">
    <citation type="journal article" date="2004" name="Genome Res.">
        <title>The status, quality, and expansion of the NIH full-length cDNA project: the Mammalian Gene Collection (MGC).</title>
        <authorList>
            <consortium name="The MGC Project Team"/>
        </authorList>
    </citation>
    <scope>NUCLEOTIDE SEQUENCE [LARGE SCALE MRNA] (ISOFORM 1)</scope>
</reference>
<reference key="6">
    <citation type="journal article" date="2002" name="Exp. Cell Res.">
        <title>Characterization of ThOX proteins as components of the thyroid H(2)O(2)-generating system.</title>
        <authorList>
            <person name="De Deken X."/>
            <person name="Wang D."/>
            <person name="Dumont J.E."/>
            <person name="Miot F."/>
        </authorList>
    </citation>
    <scope>GLYCOSYLATION</scope>
</reference>
<reference key="7">
    <citation type="journal article" date="2003" name="FASEB J.">
        <title>Dual oxidases represent novel hydrogen peroxide sources supporting mucosal surface host defense.</title>
        <authorList>
            <person name="Geiszt M."/>
            <person name="Witta J."/>
            <person name="Baffi J."/>
            <person name="Lekstrom K."/>
            <person name="Leto T.L."/>
        </authorList>
    </citation>
    <scope>FUNCTION</scope>
    <scope>TISSUE SPECIFICITY</scope>
</reference>
<reference key="8">
    <citation type="journal article" date="2004" name="J. Biol. Chem.">
        <title>NADPH oxidase-dependent acid production in airway epithelial cells.</title>
        <authorList>
            <person name="Schwarzer C."/>
            <person name="Machen T.E."/>
            <person name="Illek B."/>
            <person name="Fischer H."/>
        </authorList>
    </citation>
    <scope>SUBCELLULAR LOCATION</scope>
    <scope>TISSUE SPECIFICITY</scope>
</reference>
<reference key="9">
    <citation type="journal article" date="2005" name="FEBS Lett.">
        <title>Differential regulation of dual NADPH oxidases/peroxidases, Duox1 and Duox2, by Th1 and Th2 cytokines in respiratory tract epithelium.</title>
        <authorList>
            <person name="Harper R.W."/>
            <person name="Xu C."/>
            <person name="Eiserich J.P."/>
            <person name="Chen Y."/>
            <person name="Kao C.-Y."/>
            <person name="Thai P."/>
            <person name="Setiadi H."/>
            <person name="Wu R."/>
        </authorList>
    </citation>
    <scope>INDUCTION</scope>
</reference>
<reference key="10">
    <citation type="journal article" date="2005" name="J. Biol. Chem.">
        <title>Identification of a novel partner of duox: EFP1, a thioredoxin-related protein.</title>
        <authorList>
            <person name="Wang D."/>
            <person name="De Deken X."/>
            <person name="Milenkovic M."/>
            <person name="Song Y."/>
            <person name="Pirson I."/>
            <person name="Dumont J.E."/>
            <person name="Miot F."/>
        </authorList>
    </citation>
    <scope>INTERACTION WITH TXNDC11; TPO AND CYBA</scope>
</reference>
<reference key="11">
    <citation type="journal article" date="2005" name="J. Biol. Chem.">
        <title>Dual oxidase-2 has an intrinsic Ca2+-dependent H2O2-generating activity.</title>
        <authorList>
            <person name="Ameziane-El-Hassani R."/>
            <person name="Morand S."/>
            <person name="Boucher J.L."/>
            <person name="Frapart Y.-M."/>
            <person name="Apostolou D."/>
            <person name="Agnandji D."/>
            <person name="Gnidehou S."/>
            <person name="Ohayon R."/>
            <person name="Noel-Hudson M.-S."/>
            <person name="Francon J."/>
            <person name="Lalaoui K."/>
            <person name="Virion A."/>
            <person name="Dupuy C."/>
        </authorList>
    </citation>
    <scope>CATALYTIC ACTIVITY</scope>
    <scope>ACTIVITY REGULATION</scope>
</reference>
<gene>
    <name type="primary">DUOX1</name>
    <name type="synonym">DUOX</name>
    <name type="synonym">LNOX1</name>
    <name type="synonym">THOX1</name>
</gene>
<accession>Q9NRD9</accession>
<accession>A6NH28</accession>
<accession>Q14C94</accession>
<accession>Q6ZMB3</accession>
<accession>Q6ZR09</accession>
<accession>Q9NZC1</accession>
<organism>
    <name type="scientific">Homo sapiens</name>
    <name type="common">Human</name>
    <dbReference type="NCBI Taxonomy" id="9606"/>
    <lineage>
        <taxon>Eukaryota</taxon>
        <taxon>Metazoa</taxon>
        <taxon>Chordata</taxon>
        <taxon>Craniata</taxon>
        <taxon>Vertebrata</taxon>
        <taxon>Euteleostomi</taxon>
        <taxon>Mammalia</taxon>
        <taxon>Eutheria</taxon>
        <taxon>Euarchontoglires</taxon>
        <taxon>Primates</taxon>
        <taxon>Haplorrhini</taxon>
        <taxon>Catarrhini</taxon>
        <taxon>Hominidae</taxon>
        <taxon>Homo</taxon>
    </lineage>
</organism>
<proteinExistence type="evidence at protein level"/>
<keyword id="KW-0002">3D-structure</keyword>
<keyword id="KW-0025">Alternative splicing</keyword>
<keyword id="KW-0106">Calcium</keyword>
<keyword id="KW-1003">Cell membrane</keyword>
<keyword id="KW-0274">FAD</keyword>
<keyword id="KW-0285">Flavoprotein</keyword>
<keyword id="KW-0325">Glycoprotein</keyword>
<keyword id="KW-0376">Hydrogen peroxide</keyword>
<keyword id="KW-0472">Membrane</keyword>
<keyword id="KW-0479">Metal-binding</keyword>
<keyword id="KW-0521">NADP</keyword>
<keyword id="KW-0560">Oxidoreductase</keyword>
<keyword id="KW-0575">Peroxidase</keyword>
<keyword id="KW-1267">Proteomics identification</keyword>
<keyword id="KW-1185">Reference proteome</keyword>
<keyword id="KW-0677">Repeat</keyword>
<keyword id="KW-0732">Signal</keyword>
<keyword id="KW-0893">Thyroid hormones biosynthesis</keyword>
<keyword id="KW-0812">Transmembrane</keyword>
<keyword id="KW-1133">Transmembrane helix</keyword>
<comment type="function">
    <text evidence="7 9">Generates hydrogen peroxide which is required for the activity of thyroid peroxidase/TPO and lactoperoxidase/LPO. Plays a role in thyroid hormones synthesis and lactoperoxidase-mediated antimicrobial defense at the surface of mucosa. May have its own peroxidase activity through its N-terminal peroxidase-like domain.</text>
</comment>
<comment type="catalytic activity">
    <reaction evidence="7 13">
        <text>NADH + O2 + H(+) = H2O2 + NAD(+)</text>
        <dbReference type="Rhea" id="RHEA:11264"/>
        <dbReference type="ChEBI" id="CHEBI:15378"/>
        <dbReference type="ChEBI" id="CHEBI:15379"/>
        <dbReference type="ChEBI" id="CHEBI:16240"/>
        <dbReference type="ChEBI" id="CHEBI:57540"/>
        <dbReference type="ChEBI" id="CHEBI:57945"/>
        <dbReference type="EC" id="1.6.3.1"/>
    </reaction>
</comment>
<comment type="catalytic activity">
    <reaction evidence="7 13">
        <text>NADPH + O2 + H(+) = H2O2 + NADP(+)</text>
        <dbReference type="Rhea" id="RHEA:11260"/>
        <dbReference type="ChEBI" id="CHEBI:15378"/>
        <dbReference type="ChEBI" id="CHEBI:15379"/>
        <dbReference type="ChEBI" id="CHEBI:16240"/>
        <dbReference type="ChEBI" id="CHEBI:57783"/>
        <dbReference type="ChEBI" id="CHEBI:58349"/>
        <dbReference type="EC" id="1.6.3.1"/>
    </reaction>
</comment>
<comment type="activity regulation">
    <text evidence="7 13">The NADPH oxidase activity is calcium-dependent. Peroxidase activity is inhibited by aminobenzohydrazide.</text>
</comment>
<comment type="pathway">
    <text>Hormone biosynthesis; thyroid hormone biosynthesis.</text>
</comment>
<comment type="subunit">
    <text evidence="12">Interacts with TXNDC11, TPO and CYBA.</text>
</comment>
<comment type="interaction">
    <interactant intactId="EBI-6677285">
        <id>Q9NRD9</id>
    </interactant>
    <interactant intactId="EBI-46442099">
        <id>Q1HG43</id>
        <label>DUOXA1</label>
    </interactant>
    <organismsDiffer>false</organismsDiffer>
    <experiments>4</experiments>
</comment>
<comment type="subcellular location">
    <subcellularLocation>
        <location evidence="6 11">Apical cell membrane</location>
        <topology evidence="6 11">Multi-pass membrane protein</topology>
    </subcellularLocation>
    <text>Localizes to the apical membrane of epithelial cells.</text>
</comment>
<comment type="alternative products">
    <event type="alternative splicing"/>
    <isoform>
        <id>Q9NRD9-1</id>
        <name>1</name>
        <sequence type="displayed"/>
    </isoform>
    <isoform>
        <id>Q9NRD9-2</id>
        <name>2</name>
        <sequence type="described" ref="VSP_017262 VSP_017263"/>
    </isoform>
</comment>
<comment type="tissue specificity">
    <text evidence="6 7 9 11">Expressed in thyrocytes and tracheal surface epithelial cells (at protein level). Expressed in thyroid, trachea, bronchium, and to a lower extent, in placenta, testis, prostate, pancreas and heart.</text>
</comment>
<comment type="developmental stage">
    <text evidence="7">Widely expressed in fetal tissues.</text>
</comment>
<comment type="induction">
    <text evidence="6 14">By forskolin (at protein level). By thyrotropin and the Th2-specific cytokines IL-4 and IL-13.</text>
</comment>
<comment type="PTM">
    <text evidence="8">N-glycosylated.</text>
</comment>
<comment type="similarity">
    <text evidence="16">In the N-terminal section; belongs to the peroxidase family.</text>
</comment>
<comment type="sequence caution" evidence="16">
    <conflict type="erroneous termination">
        <sequence resource="EMBL" id="AK128591"/>
    </conflict>
    <text>Truncated C-terminus.</text>
</comment>
<comment type="sequence caution" evidence="16">
    <conflict type="erroneous initiation">
        <sequence resource="EMBL-CDS" id="BAD18816"/>
    </conflict>
</comment>
<feature type="signal peptide" evidence="2">
    <location>
        <begin position="1"/>
        <end position="21"/>
    </location>
</feature>
<feature type="chain" id="PRO_0000223344" description="Dual oxidase 1">
    <location>
        <begin position="22"/>
        <end position="1551"/>
    </location>
</feature>
<feature type="topological domain" description="Extracellular" evidence="2">
    <location>
        <begin position="22"/>
        <end position="596"/>
    </location>
</feature>
<feature type="transmembrane region" description="Helical" evidence="2">
    <location>
        <begin position="597"/>
        <end position="617"/>
    </location>
</feature>
<feature type="topological domain" description="Cytoplasmic" evidence="2">
    <location>
        <begin position="618"/>
        <end position="1044"/>
    </location>
</feature>
<feature type="transmembrane region" description="Helical" evidence="2">
    <location>
        <begin position="1045"/>
        <end position="1065"/>
    </location>
</feature>
<feature type="topological domain" description="Extracellular" evidence="2">
    <location>
        <begin position="1066"/>
        <end position="1080"/>
    </location>
</feature>
<feature type="transmembrane region" description="Helical" evidence="2">
    <location>
        <begin position="1081"/>
        <end position="1101"/>
    </location>
</feature>
<feature type="topological domain" description="Cytoplasmic" evidence="2">
    <location>
        <begin position="1102"/>
        <end position="1148"/>
    </location>
</feature>
<feature type="transmembrane region" description="Helical" evidence="2">
    <location>
        <begin position="1149"/>
        <end position="1171"/>
    </location>
</feature>
<feature type="topological domain" description="Extracellular" evidence="2">
    <location>
        <begin position="1172"/>
        <end position="1188"/>
    </location>
</feature>
<feature type="transmembrane region" description="Helical" evidence="2">
    <location>
        <begin position="1189"/>
        <end position="1209"/>
    </location>
</feature>
<feature type="topological domain" description="Cytoplasmic" evidence="2">
    <location>
        <begin position="1210"/>
        <end position="1226"/>
    </location>
</feature>
<feature type="transmembrane region" description="Helical" evidence="2">
    <location>
        <begin position="1227"/>
        <end position="1247"/>
    </location>
</feature>
<feature type="topological domain" description="Extracellular" evidence="2">
    <location>
        <position position="1248"/>
    </location>
</feature>
<feature type="transmembrane region" description="Helical" evidence="2">
    <location>
        <begin position="1249"/>
        <end position="1269"/>
    </location>
</feature>
<feature type="topological domain" description="Cytoplasmic" evidence="2">
    <location>
        <begin position="1270"/>
        <end position="1551"/>
    </location>
</feature>
<feature type="domain" description="EF-hand 1" evidence="3">
    <location>
        <begin position="815"/>
        <end position="850"/>
    </location>
</feature>
<feature type="domain" description="EF-hand 2" evidence="3">
    <location>
        <begin position="851"/>
        <end position="886"/>
    </location>
</feature>
<feature type="domain" description="EF-hand 3" evidence="3">
    <location>
        <begin position="895"/>
        <end position="930"/>
    </location>
</feature>
<feature type="domain" description="Ferric oxidoreductase">
    <location>
        <begin position="1087"/>
        <end position="1269"/>
    </location>
</feature>
<feature type="domain" description="FAD-binding FR-type" evidence="4">
    <location>
        <begin position="1270"/>
        <end position="1376"/>
    </location>
</feature>
<feature type="region of interest" description="Peroxidase-like; mediates peroxidase activity">
    <location>
        <begin position="26"/>
        <end position="593"/>
    </location>
</feature>
<feature type="region of interest" description="Disordered" evidence="5">
    <location>
        <begin position="150"/>
        <end position="172"/>
    </location>
</feature>
<feature type="region of interest" description="Interaction with TXNDC11" evidence="1">
    <location>
        <begin position="956"/>
        <end position="1248"/>
    </location>
</feature>
<feature type="binding site" evidence="3">
    <location>
        <position position="828"/>
    </location>
    <ligand>
        <name>Ca(2+)</name>
        <dbReference type="ChEBI" id="CHEBI:29108"/>
        <label>1</label>
    </ligand>
</feature>
<feature type="binding site" evidence="3">
    <location>
        <position position="830"/>
    </location>
    <ligand>
        <name>Ca(2+)</name>
        <dbReference type="ChEBI" id="CHEBI:29108"/>
        <label>1</label>
    </ligand>
</feature>
<feature type="binding site" evidence="3">
    <location>
        <position position="832"/>
    </location>
    <ligand>
        <name>Ca(2+)</name>
        <dbReference type="ChEBI" id="CHEBI:29108"/>
        <label>1</label>
    </ligand>
</feature>
<feature type="binding site" evidence="3">
    <location>
        <position position="834"/>
    </location>
    <ligand>
        <name>Ca(2+)</name>
        <dbReference type="ChEBI" id="CHEBI:29108"/>
        <label>1</label>
    </ligand>
</feature>
<feature type="binding site" evidence="3">
    <location>
        <position position="839"/>
    </location>
    <ligand>
        <name>Ca(2+)</name>
        <dbReference type="ChEBI" id="CHEBI:29108"/>
        <label>1</label>
    </ligand>
</feature>
<feature type="binding site" evidence="3">
    <location>
        <position position="864"/>
    </location>
    <ligand>
        <name>Ca(2+)</name>
        <dbReference type="ChEBI" id="CHEBI:29108"/>
        <label>2</label>
    </ligand>
</feature>
<feature type="binding site" evidence="3">
    <location>
        <position position="866"/>
    </location>
    <ligand>
        <name>Ca(2+)</name>
        <dbReference type="ChEBI" id="CHEBI:29108"/>
        <label>2</label>
    </ligand>
</feature>
<feature type="binding site" evidence="3">
    <location>
        <position position="868"/>
    </location>
    <ligand>
        <name>Ca(2+)</name>
        <dbReference type="ChEBI" id="CHEBI:29108"/>
        <label>2</label>
    </ligand>
</feature>
<feature type="binding site" evidence="3">
    <location>
        <position position="875"/>
    </location>
    <ligand>
        <name>Ca(2+)</name>
        <dbReference type="ChEBI" id="CHEBI:29108"/>
        <label>2</label>
    </ligand>
</feature>
<feature type="glycosylation site" description="N-linked (GlcNAc...) asparagine" evidence="2">
    <location>
        <position position="94"/>
    </location>
</feature>
<feature type="glycosylation site" description="N-linked (GlcNAc...) asparagine" evidence="2">
    <location>
        <position position="342"/>
    </location>
</feature>
<feature type="glycosylation site" description="N-linked (GlcNAc...) asparagine" evidence="2">
    <location>
        <position position="354"/>
    </location>
</feature>
<feature type="glycosylation site" description="N-linked (GlcNAc...) asparagine" evidence="2">
    <location>
        <position position="461"/>
    </location>
</feature>
<feature type="glycosylation site" description="N-linked (GlcNAc...) asparagine" evidence="2">
    <location>
        <position position="534"/>
    </location>
</feature>
<feature type="splice variant" id="VSP_017262" description="In isoform 2." evidence="15">
    <location>
        <begin position="1"/>
        <end position="354"/>
    </location>
</feature>
<feature type="splice variant" id="VSP_017263" description="In isoform 2." evidence="15">
    <original>SSVSRALRVCNSYWSREHPSLQSAEDVDALLLGMASQIAEREDHVLVEDVR</original>
    <variation>MWMHCCWAWPPRSQSERTMCWLKMCGVSLRLSLQVVNSWPLGRGSAGLPEP</variation>
    <location>
        <begin position="355"/>
        <end position="405"/>
    </location>
</feature>
<feature type="sequence variant" id="VAR_049104" description="In dbSNP:rs16939743.">
    <original>I</original>
    <variation>T</variation>
    <location>
        <position position="962"/>
    </location>
</feature>
<feature type="sequence variant" id="VAR_025321" description="In dbSNP:rs16939752." evidence="10">
    <original>C</original>
    <variation>R</variation>
    <location>
        <position position="1026"/>
    </location>
</feature>
<feature type="sequence variant" id="VAR_025322" description="In dbSNP:rs2458236." evidence="7">
    <original>L</original>
    <variation>F</variation>
    <location>
        <position position="1178"/>
    </location>
</feature>
<feature type="sequence conflict" description="In Ref. 3; AK128591." evidence="16" ref="3">
    <original>K</original>
    <variation>E</variation>
    <location>
        <position position="413"/>
    </location>
</feature>
<feature type="sequence conflict" description="In Ref. 3; BAD18816." evidence="16" ref="3">
    <original>G</original>
    <variation>R</variation>
    <location>
        <position position="1388"/>
    </location>
</feature>
<feature type="strand" evidence="18">
    <location>
        <begin position="38"/>
        <end position="40"/>
    </location>
</feature>
<feature type="turn" evidence="18">
    <location>
        <begin position="42"/>
        <end position="45"/>
    </location>
</feature>
<feature type="strand" evidence="18">
    <location>
        <begin position="60"/>
        <end position="64"/>
    </location>
</feature>
<feature type="turn" evidence="18">
    <location>
        <begin position="69"/>
        <end position="71"/>
    </location>
</feature>
<feature type="helix" evidence="18">
    <location>
        <begin position="75"/>
        <end position="83"/>
    </location>
</feature>
<feature type="helix" evidence="18">
    <location>
        <begin position="97"/>
        <end position="110"/>
    </location>
</feature>
<feature type="turn" evidence="18">
    <location>
        <begin position="132"/>
        <end position="134"/>
    </location>
</feature>
<feature type="strand" evidence="18">
    <location>
        <begin position="155"/>
        <end position="158"/>
    </location>
</feature>
<feature type="strand" evidence="18">
    <location>
        <begin position="171"/>
        <end position="175"/>
    </location>
</feature>
<feature type="helix" evidence="18">
    <location>
        <begin position="176"/>
        <end position="179"/>
    </location>
</feature>
<feature type="helix" evidence="18">
    <location>
        <begin position="183"/>
        <end position="189"/>
    </location>
</feature>
<feature type="turn" evidence="18">
    <location>
        <begin position="221"/>
        <end position="223"/>
    </location>
</feature>
<feature type="helix" evidence="18">
    <location>
        <begin position="228"/>
        <end position="230"/>
    </location>
</feature>
<feature type="turn" evidence="18">
    <location>
        <begin position="237"/>
        <end position="240"/>
    </location>
</feature>
<feature type="helix" evidence="18">
    <location>
        <begin position="243"/>
        <end position="266"/>
    </location>
</feature>
<feature type="helix" evidence="18">
    <location>
        <begin position="272"/>
        <end position="293"/>
    </location>
</feature>
<feature type="helix" evidence="18">
    <location>
        <begin position="295"/>
        <end position="300"/>
    </location>
</feature>
<feature type="helix" evidence="18">
    <location>
        <begin position="320"/>
        <end position="331"/>
    </location>
</feature>
<feature type="strand" evidence="18">
    <location>
        <begin position="336"/>
        <end position="338"/>
    </location>
</feature>
<feature type="strand" evidence="18">
    <location>
        <begin position="357"/>
        <end position="363"/>
    </location>
</feature>
<feature type="helix" evidence="18">
    <location>
        <begin position="378"/>
        <end position="390"/>
    </location>
</feature>
<feature type="strand" evidence="18">
    <location>
        <begin position="396"/>
        <end position="398"/>
    </location>
</feature>
<feature type="helix" evidence="18">
    <location>
        <begin position="402"/>
        <end position="405"/>
    </location>
</feature>
<feature type="strand" evidence="18">
    <location>
        <begin position="411"/>
        <end position="417"/>
    </location>
</feature>
<feature type="helix" evidence="18">
    <location>
        <begin position="419"/>
        <end position="429"/>
    </location>
</feature>
<feature type="helix" evidence="18">
    <location>
        <begin position="435"/>
        <end position="441"/>
    </location>
</feature>
<feature type="helix" evidence="18">
    <location>
        <begin position="450"/>
        <end position="452"/>
    </location>
</feature>
<feature type="helix" evidence="18">
    <location>
        <begin position="455"/>
        <end position="459"/>
    </location>
</feature>
<feature type="helix" evidence="18">
    <location>
        <begin position="464"/>
        <end position="471"/>
    </location>
</feature>
<feature type="turn" evidence="18">
    <location>
        <begin position="472"/>
        <end position="474"/>
    </location>
</feature>
<feature type="helix" evidence="18">
    <location>
        <begin position="476"/>
        <end position="478"/>
    </location>
</feature>
<feature type="helix" evidence="18">
    <location>
        <begin position="481"/>
        <end position="488"/>
    </location>
</feature>
<feature type="strand" evidence="18">
    <location>
        <begin position="490"/>
        <end position="492"/>
    </location>
</feature>
<feature type="helix" evidence="18">
    <location>
        <begin position="495"/>
        <end position="510"/>
    </location>
</feature>
<feature type="helix" evidence="18">
    <location>
        <begin position="519"/>
        <end position="521"/>
    </location>
</feature>
<feature type="helix" evidence="18">
    <location>
        <begin position="526"/>
        <end position="534"/>
    </location>
</feature>
<feature type="helix" evidence="18">
    <location>
        <begin position="537"/>
        <end position="545"/>
    </location>
</feature>
<feature type="helix" evidence="18">
    <location>
        <begin position="549"/>
        <end position="551"/>
    </location>
</feature>
<feature type="strand" evidence="17">
    <location>
        <begin position="563"/>
        <end position="565"/>
    </location>
</feature>
<feature type="helix" evidence="18">
    <location>
        <begin position="592"/>
        <end position="618"/>
    </location>
</feature>
<feature type="strand" evidence="18">
    <location>
        <begin position="645"/>
        <end position="648"/>
    </location>
</feature>
<feature type="strand" evidence="18">
    <location>
        <begin position="652"/>
        <end position="654"/>
    </location>
</feature>
<feature type="strand" evidence="18">
    <location>
        <begin position="657"/>
        <end position="663"/>
    </location>
</feature>
<feature type="strand" evidence="18">
    <location>
        <begin position="665"/>
        <end position="672"/>
    </location>
</feature>
<feature type="strand" evidence="18">
    <location>
        <begin position="677"/>
        <end position="682"/>
    </location>
</feature>
<feature type="strand" evidence="18">
    <location>
        <begin position="690"/>
        <end position="693"/>
    </location>
</feature>
<feature type="strand" evidence="18">
    <location>
        <begin position="701"/>
        <end position="705"/>
    </location>
</feature>
<feature type="strand" evidence="18">
    <location>
        <begin position="707"/>
        <end position="709"/>
    </location>
</feature>
<feature type="strand" evidence="18">
    <location>
        <begin position="712"/>
        <end position="715"/>
    </location>
</feature>
<feature type="helix" evidence="18">
    <location>
        <begin position="719"/>
        <end position="734"/>
    </location>
</feature>
<feature type="strand" evidence="18">
    <location>
        <begin position="741"/>
        <end position="744"/>
    </location>
</feature>
<feature type="helix" evidence="18">
    <location>
        <begin position="747"/>
        <end position="752"/>
    </location>
</feature>
<feature type="helix" evidence="18">
    <location>
        <begin position="757"/>
        <end position="775"/>
    </location>
</feature>
<feature type="helix" evidence="18">
    <location>
        <begin position="792"/>
        <end position="798"/>
    </location>
</feature>
<feature type="helix" evidence="18">
    <location>
        <begin position="804"/>
        <end position="811"/>
    </location>
</feature>
<feature type="helix" evidence="18">
    <location>
        <begin position="818"/>
        <end position="827"/>
    </location>
</feature>
<feature type="strand" evidence="18">
    <location>
        <begin position="832"/>
        <end position="835"/>
    </location>
</feature>
<feature type="helix" evidence="18">
    <location>
        <begin position="837"/>
        <end position="849"/>
    </location>
</feature>
<feature type="helix" evidence="18">
    <location>
        <begin position="852"/>
        <end position="863"/>
    </location>
</feature>
<feature type="strand" evidence="18">
    <location>
        <begin position="868"/>
        <end position="871"/>
    </location>
</feature>
<feature type="helix" evidence="18">
    <location>
        <begin position="873"/>
        <end position="883"/>
    </location>
</feature>
<feature type="helix" evidence="18">
    <location>
        <begin position="894"/>
        <end position="901"/>
    </location>
</feature>
<feature type="helix" evidence="18">
    <location>
        <begin position="917"/>
        <end position="923"/>
    </location>
</feature>
<feature type="turn" evidence="18">
    <location>
        <begin position="1025"/>
        <end position="1027"/>
    </location>
</feature>
<feature type="helix" evidence="18">
    <location>
        <begin position="1028"/>
        <end position="1068"/>
    </location>
</feature>
<feature type="turn" evidence="18">
    <location>
        <begin position="1071"/>
        <end position="1074"/>
    </location>
</feature>
<feature type="turn" evidence="18">
    <location>
        <begin position="1076"/>
        <end position="1078"/>
    </location>
</feature>
<feature type="helix" evidence="18">
    <location>
        <begin position="1081"/>
        <end position="1099"/>
    </location>
</feature>
<feature type="helix" evidence="18">
    <location>
        <begin position="1100"/>
        <end position="1104"/>
    </location>
</feature>
<feature type="helix" evidence="18">
    <location>
        <begin position="1106"/>
        <end position="1113"/>
    </location>
</feature>
<feature type="helix" evidence="18">
    <location>
        <begin position="1116"/>
        <end position="1119"/>
    </location>
</feature>
<feature type="helix" evidence="18">
    <location>
        <begin position="1123"/>
        <end position="1125"/>
    </location>
</feature>
<feature type="helix" evidence="18">
    <location>
        <begin position="1126"/>
        <end position="1157"/>
    </location>
</feature>
<feature type="helix" evidence="18">
    <location>
        <begin position="1160"/>
        <end position="1166"/>
    </location>
</feature>
<feature type="turn" evidence="18">
    <location>
        <begin position="1168"/>
        <end position="1170"/>
    </location>
</feature>
<feature type="helix" evidence="18">
    <location>
        <begin position="1182"/>
        <end position="1187"/>
    </location>
</feature>
<feature type="helix" evidence="18">
    <location>
        <begin position="1190"/>
        <end position="1208"/>
    </location>
</feature>
<feature type="helix" evidence="18">
    <location>
        <begin position="1211"/>
        <end position="1216"/>
    </location>
</feature>
<feature type="helix" evidence="18">
    <location>
        <begin position="1219"/>
        <end position="1225"/>
    </location>
</feature>
<feature type="helix" evidence="18">
    <location>
        <begin position="1228"/>
        <end position="1238"/>
    </location>
</feature>
<feature type="turn" evidence="18">
    <location>
        <begin position="1239"/>
        <end position="1241"/>
    </location>
</feature>
<feature type="strand" evidence="18">
    <location>
        <begin position="1243"/>
        <end position="1245"/>
    </location>
</feature>
<feature type="helix" evidence="18">
    <location>
        <begin position="1249"/>
        <end position="1269"/>
    </location>
</feature>
<feature type="strand" evidence="18">
    <location>
        <begin position="1273"/>
        <end position="1275"/>
    </location>
</feature>
<feature type="strand" evidence="18">
    <location>
        <begin position="1277"/>
        <end position="1283"/>
    </location>
</feature>
<feature type="turn" evidence="18">
    <location>
        <begin position="1284"/>
        <end position="1286"/>
    </location>
</feature>
<feature type="strand" evidence="18">
    <location>
        <begin position="1287"/>
        <end position="1293"/>
    </location>
</feature>
<feature type="strand" evidence="18">
    <location>
        <begin position="1305"/>
        <end position="1310"/>
    </location>
</feature>
<feature type="helix" evidence="18">
    <location>
        <begin position="1311"/>
        <end position="1313"/>
    </location>
</feature>
<feature type="strand" evidence="18">
    <location>
        <begin position="1319"/>
        <end position="1323"/>
    </location>
</feature>
<feature type="strand" evidence="18">
    <location>
        <begin position="1329"/>
        <end position="1337"/>
    </location>
</feature>
<feature type="helix" evidence="18">
    <location>
        <begin position="1341"/>
        <end position="1349"/>
    </location>
</feature>
<feature type="strand" evidence="18">
    <location>
        <begin position="1364"/>
        <end position="1367"/>
    </location>
</feature>
<feature type="helix" evidence="18">
    <location>
        <begin position="1376"/>
        <end position="1379"/>
    </location>
</feature>
<feature type="strand" evidence="18">
    <location>
        <begin position="1380"/>
        <end position="1388"/>
    </location>
</feature>
<feature type="helix" evidence="18">
    <location>
        <begin position="1389"/>
        <end position="1392"/>
    </location>
</feature>
<feature type="helix" evidence="18">
    <location>
        <begin position="1393"/>
        <end position="1408"/>
    </location>
</feature>
<feature type="strand" evidence="18">
    <location>
        <begin position="1416"/>
        <end position="1424"/>
    </location>
</feature>
<feature type="helix" evidence="18">
    <location>
        <begin position="1430"/>
        <end position="1442"/>
    </location>
</feature>
<feature type="strand" evidence="18">
    <location>
        <begin position="1448"/>
        <end position="1454"/>
    </location>
</feature>
<feature type="helix" evidence="18">
    <location>
        <begin position="1458"/>
        <end position="1460"/>
    </location>
</feature>
<feature type="helix" evidence="18">
    <location>
        <begin position="1463"/>
        <end position="1473"/>
    </location>
</feature>
<feature type="strand" evidence="18">
    <location>
        <begin position="1478"/>
        <end position="1481"/>
    </location>
</feature>
<feature type="turn" evidence="18">
    <location>
        <begin position="1483"/>
        <end position="1485"/>
    </location>
</feature>
<feature type="strand" evidence="18">
    <location>
        <begin position="1488"/>
        <end position="1494"/>
    </location>
</feature>
<feature type="helix" evidence="18">
    <location>
        <begin position="1498"/>
        <end position="1508"/>
    </location>
</feature>
<feature type="strand" evidence="18">
    <location>
        <begin position="1509"/>
        <end position="1511"/>
    </location>
</feature>
<feature type="strand" evidence="18">
    <location>
        <begin position="1513"/>
        <end position="1521"/>
    </location>
</feature>
<feature type="helix" evidence="18">
    <location>
        <begin position="1523"/>
        <end position="1538"/>
    </location>
</feature>
<feature type="strand" evidence="18">
    <location>
        <begin position="1539"/>
        <end position="1548"/>
    </location>
</feature>
<evidence type="ECO:0000250" key="1"/>
<evidence type="ECO:0000255" key="2"/>
<evidence type="ECO:0000255" key="3">
    <source>
        <dbReference type="PROSITE-ProRule" id="PRU00448"/>
    </source>
</evidence>
<evidence type="ECO:0000255" key="4">
    <source>
        <dbReference type="PROSITE-ProRule" id="PRU00716"/>
    </source>
</evidence>
<evidence type="ECO:0000256" key="5">
    <source>
        <dbReference type="SAM" id="MobiDB-lite"/>
    </source>
</evidence>
<evidence type="ECO:0000269" key="6">
    <source>
    </source>
</evidence>
<evidence type="ECO:0000269" key="7">
    <source>
    </source>
</evidence>
<evidence type="ECO:0000269" key="8">
    <source>
    </source>
</evidence>
<evidence type="ECO:0000269" key="9">
    <source>
    </source>
</evidence>
<evidence type="ECO:0000269" key="10">
    <source>
    </source>
</evidence>
<evidence type="ECO:0000269" key="11">
    <source>
    </source>
</evidence>
<evidence type="ECO:0000269" key="12">
    <source>
    </source>
</evidence>
<evidence type="ECO:0000269" key="13">
    <source>
    </source>
</evidence>
<evidence type="ECO:0000269" key="14">
    <source>
    </source>
</evidence>
<evidence type="ECO:0000303" key="15">
    <source>
    </source>
</evidence>
<evidence type="ECO:0000305" key="16"/>
<evidence type="ECO:0007829" key="17">
    <source>
        <dbReference type="PDB" id="7D3E"/>
    </source>
</evidence>
<evidence type="ECO:0007829" key="18">
    <source>
        <dbReference type="PDB" id="7D3F"/>
    </source>
</evidence>
<protein>
    <recommendedName>
        <fullName>Dual oxidase 1</fullName>
        <ecNumber>1.11.1.-</ecNumber>
        <ecNumber>1.6.3.1</ecNumber>
    </recommendedName>
    <alternativeName>
        <fullName>Large NOX 1</fullName>
    </alternativeName>
    <alternativeName>
        <fullName>Long NOX 1</fullName>
    </alternativeName>
    <alternativeName>
        <fullName>NADPH thyroid oxidase 1</fullName>
    </alternativeName>
    <alternativeName>
        <fullName>Thyroid oxidase 1</fullName>
    </alternativeName>
</protein>